<accession>Q99932</accession>
<accession>B4DY89</accession>
<accession>E9PDV6</accession>
<accession>Q12937</accession>
<accession>Q5TCV8</accession>
<accession>Q8WWB4</accession>
<name>SPAG8_HUMAN</name>
<keyword id="KW-0002">3D-structure</keyword>
<keyword id="KW-0025">Alternative splicing</keyword>
<keyword id="KW-0131">Cell cycle</keyword>
<keyword id="KW-0966">Cell projection</keyword>
<keyword id="KW-0969">Cilium</keyword>
<keyword id="KW-0963">Cytoplasm</keyword>
<keyword id="KW-0968">Cytoplasmic vesicle</keyword>
<keyword id="KW-0206">Cytoskeleton</keyword>
<keyword id="KW-0221">Differentiation</keyword>
<keyword id="KW-0278">Fertilization</keyword>
<keyword id="KW-0282">Flagellum</keyword>
<keyword id="KW-0539">Nucleus</keyword>
<keyword id="KW-1267">Proteomics identification</keyword>
<keyword id="KW-1185">Reference proteome</keyword>
<keyword id="KW-0744">Spermatogenesis</keyword>
<sequence length="485" mass="51139">METNESTEGSRSRSRSLDIQPSSEGLGPTSEPFPSSDDSPRSALAAATAAAAAAASAAAATAAFTTAKAAALSTKTPAPCSEFMEPSSDPSLLGEPCAGPGFTHNIAHGSLGFEPVYVSCIAQDTCTTTDHSSNPGPVPGSSSGPVLGSSSGAGHGSGSGSGPGCGSVPGSGSGPGPGSGPGSGPGHGSGSHPGPASGPGPDTGPDSELSPCIPPGFRNLVADRVPNYTSWSQHCPWEPQKQPPWEFLQVLEPGARGLWKPPDIKGKLMVCYETLPRGQCLLYNWEEERATNHLDQVPSMQDGSESFFFRHGHRGLLTMQLKSPMPSSTTQKDSYQPPGNVYWPLRGKREAMLEMLLQHQICKEVQAEQEPTRKLFEVESVTHHDYRMELAQAGTPAPTKPHDYRQEQPETFWIQRAPQLPGVSNIRTLDTPFRKNCSFSTPVPLSLGKLLPYEPENYPYQLGEISSLPCPGGRLGGGGGRMTPF</sequence>
<reference key="1">
    <citation type="journal article" date="1996" name="Biol. Reprod.">
        <title>Expression and characterization of a novel human sperm membrane protein.</title>
        <authorList>
            <person name="Liu Q.-Y."/>
            <person name="Wang L.F."/>
            <person name="Miao S.Y."/>
            <person name="Catterall J.F."/>
        </authorList>
    </citation>
    <scope>NUCLEOTIDE SEQUENCE [MRNA] (ISOFORM 1)</scope>
    <scope>TISSUE SPECIFICITY</scope>
    <scope>SUBCELLULAR LOCATION</scope>
    <source>
        <tissue>Testis</tissue>
    </source>
</reference>
<reference key="2">
    <citation type="journal article" date="1999" name="Biochim. Biophys. Acta">
        <title>Assignment of chromosomal locus and evidence for alternatively spliced mRNAs of a human sperm membrane protein (hSMP-1).</title>
        <authorList>
            <person name="Wang H."/>
            <person name="Miao S.Y."/>
            <person name="Chen D."/>
            <person name="Wang L.F."/>
            <person name="Koide S.S."/>
        </authorList>
    </citation>
    <scope>NUCLEOTIDE SEQUENCE [MRNA] (ISOFORM 1)</scope>
    <scope>ALTERNATIVE SPLICING</scope>
    <scope>FUNCTION</scope>
    <source>
        <tissue>Testis</tissue>
    </source>
</reference>
<reference key="3">
    <citation type="journal article" date="2004" name="Nat. Genet.">
        <title>Complete sequencing and characterization of 21,243 full-length human cDNAs.</title>
        <authorList>
            <person name="Ota T."/>
            <person name="Suzuki Y."/>
            <person name="Nishikawa T."/>
            <person name="Otsuki T."/>
            <person name="Sugiyama T."/>
            <person name="Irie R."/>
            <person name="Wakamatsu A."/>
            <person name="Hayashi K."/>
            <person name="Sato H."/>
            <person name="Nagai K."/>
            <person name="Kimura K."/>
            <person name="Makita H."/>
            <person name="Sekine M."/>
            <person name="Obayashi M."/>
            <person name="Nishi T."/>
            <person name="Shibahara T."/>
            <person name="Tanaka T."/>
            <person name="Ishii S."/>
            <person name="Yamamoto J."/>
            <person name="Saito K."/>
            <person name="Kawai Y."/>
            <person name="Isono Y."/>
            <person name="Nakamura Y."/>
            <person name="Nagahari K."/>
            <person name="Murakami K."/>
            <person name="Yasuda T."/>
            <person name="Iwayanagi T."/>
            <person name="Wagatsuma M."/>
            <person name="Shiratori A."/>
            <person name="Sudo H."/>
            <person name="Hosoiri T."/>
            <person name="Kaku Y."/>
            <person name="Kodaira H."/>
            <person name="Kondo H."/>
            <person name="Sugawara M."/>
            <person name="Takahashi M."/>
            <person name="Kanda K."/>
            <person name="Yokoi T."/>
            <person name="Furuya T."/>
            <person name="Kikkawa E."/>
            <person name="Omura Y."/>
            <person name="Abe K."/>
            <person name="Kamihara K."/>
            <person name="Katsuta N."/>
            <person name="Sato K."/>
            <person name="Tanikawa M."/>
            <person name="Yamazaki M."/>
            <person name="Ninomiya K."/>
            <person name="Ishibashi T."/>
            <person name="Yamashita H."/>
            <person name="Murakawa K."/>
            <person name="Fujimori K."/>
            <person name="Tanai H."/>
            <person name="Kimata M."/>
            <person name="Watanabe M."/>
            <person name="Hiraoka S."/>
            <person name="Chiba Y."/>
            <person name="Ishida S."/>
            <person name="Ono Y."/>
            <person name="Takiguchi S."/>
            <person name="Watanabe S."/>
            <person name="Yosida M."/>
            <person name="Hotuta T."/>
            <person name="Kusano J."/>
            <person name="Kanehori K."/>
            <person name="Takahashi-Fujii A."/>
            <person name="Hara H."/>
            <person name="Tanase T.-O."/>
            <person name="Nomura Y."/>
            <person name="Togiya S."/>
            <person name="Komai F."/>
            <person name="Hara R."/>
            <person name="Takeuchi K."/>
            <person name="Arita M."/>
            <person name="Imose N."/>
            <person name="Musashino K."/>
            <person name="Yuuki H."/>
            <person name="Oshima A."/>
            <person name="Sasaki N."/>
            <person name="Aotsuka S."/>
            <person name="Yoshikawa Y."/>
            <person name="Matsunawa H."/>
            <person name="Ichihara T."/>
            <person name="Shiohata N."/>
            <person name="Sano S."/>
            <person name="Moriya S."/>
            <person name="Momiyama H."/>
            <person name="Satoh N."/>
            <person name="Takami S."/>
            <person name="Terashima Y."/>
            <person name="Suzuki O."/>
            <person name="Nakagawa S."/>
            <person name="Senoh A."/>
            <person name="Mizoguchi H."/>
            <person name="Goto Y."/>
            <person name="Shimizu F."/>
            <person name="Wakebe H."/>
            <person name="Hishigaki H."/>
            <person name="Watanabe T."/>
            <person name="Sugiyama A."/>
            <person name="Takemoto M."/>
            <person name="Kawakami B."/>
            <person name="Yamazaki M."/>
            <person name="Watanabe K."/>
            <person name="Kumagai A."/>
            <person name="Itakura S."/>
            <person name="Fukuzumi Y."/>
            <person name="Fujimori Y."/>
            <person name="Komiyama M."/>
            <person name="Tashiro H."/>
            <person name="Tanigami A."/>
            <person name="Fujiwara T."/>
            <person name="Ono T."/>
            <person name="Yamada K."/>
            <person name="Fujii Y."/>
            <person name="Ozaki K."/>
            <person name="Hirao M."/>
            <person name="Ohmori Y."/>
            <person name="Kawabata A."/>
            <person name="Hikiji T."/>
            <person name="Kobatake N."/>
            <person name="Inagaki H."/>
            <person name="Ikema Y."/>
            <person name="Okamoto S."/>
            <person name="Okitani R."/>
            <person name="Kawakami T."/>
            <person name="Noguchi S."/>
            <person name="Itoh T."/>
            <person name="Shigeta K."/>
            <person name="Senba T."/>
            <person name="Matsumura K."/>
            <person name="Nakajima Y."/>
            <person name="Mizuno T."/>
            <person name="Morinaga M."/>
            <person name="Sasaki M."/>
            <person name="Togashi T."/>
            <person name="Oyama M."/>
            <person name="Hata H."/>
            <person name="Watanabe M."/>
            <person name="Komatsu T."/>
            <person name="Mizushima-Sugano J."/>
            <person name="Satoh T."/>
            <person name="Shirai Y."/>
            <person name="Takahashi Y."/>
            <person name="Nakagawa K."/>
            <person name="Okumura K."/>
            <person name="Nagase T."/>
            <person name="Nomura N."/>
            <person name="Kikuchi H."/>
            <person name="Masuho Y."/>
            <person name="Yamashita R."/>
            <person name="Nakai K."/>
            <person name="Yada T."/>
            <person name="Nakamura Y."/>
            <person name="Ohara O."/>
            <person name="Isogai T."/>
            <person name="Sugano S."/>
        </authorList>
    </citation>
    <scope>NUCLEOTIDE SEQUENCE [LARGE SCALE MRNA] (ISOFORM 3)</scope>
    <source>
        <tissue>Testis</tissue>
    </source>
</reference>
<reference key="4">
    <citation type="journal article" date="2004" name="Nature">
        <title>DNA sequence and analysis of human chromosome 9.</title>
        <authorList>
            <person name="Humphray S.J."/>
            <person name="Oliver K."/>
            <person name="Hunt A.R."/>
            <person name="Plumb R.W."/>
            <person name="Loveland J.E."/>
            <person name="Howe K.L."/>
            <person name="Andrews T.D."/>
            <person name="Searle S."/>
            <person name="Hunt S.E."/>
            <person name="Scott C.E."/>
            <person name="Jones M.C."/>
            <person name="Ainscough R."/>
            <person name="Almeida J.P."/>
            <person name="Ambrose K.D."/>
            <person name="Ashwell R.I.S."/>
            <person name="Babbage A.K."/>
            <person name="Babbage S."/>
            <person name="Bagguley C.L."/>
            <person name="Bailey J."/>
            <person name="Banerjee R."/>
            <person name="Barker D.J."/>
            <person name="Barlow K.F."/>
            <person name="Bates K."/>
            <person name="Beasley H."/>
            <person name="Beasley O."/>
            <person name="Bird C.P."/>
            <person name="Bray-Allen S."/>
            <person name="Brown A.J."/>
            <person name="Brown J.Y."/>
            <person name="Burford D."/>
            <person name="Burrill W."/>
            <person name="Burton J."/>
            <person name="Carder C."/>
            <person name="Carter N.P."/>
            <person name="Chapman J.C."/>
            <person name="Chen Y."/>
            <person name="Clarke G."/>
            <person name="Clark S.Y."/>
            <person name="Clee C.M."/>
            <person name="Clegg S."/>
            <person name="Collier R.E."/>
            <person name="Corby N."/>
            <person name="Crosier M."/>
            <person name="Cummings A.T."/>
            <person name="Davies J."/>
            <person name="Dhami P."/>
            <person name="Dunn M."/>
            <person name="Dutta I."/>
            <person name="Dyer L.W."/>
            <person name="Earthrowl M.E."/>
            <person name="Faulkner L."/>
            <person name="Fleming C.J."/>
            <person name="Frankish A."/>
            <person name="Frankland J.A."/>
            <person name="French L."/>
            <person name="Fricker D.G."/>
            <person name="Garner P."/>
            <person name="Garnett J."/>
            <person name="Ghori J."/>
            <person name="Gilbert J.G.R."/>
            <person name="Glison C."/>
            <person name="Grafham D.V."/>
            <person name="Gribble S."/>
            <person name="Griffiths C."/>
            <person name="Griffiths-Jones S."/>
            <person name="Grocock R."/>
            <person name="Guy J."/>
            <person name="Hall R.E."/>
            <person name="Hammond S."/>
            <person name="Harley J.L."/>
            <person name="Harrison E.S.I."/>
            <person name="Hart E.A."/>
            <person name="Heath P.D."/>
            <person name="Henderson C.D."/>
            <person name="Hopkins B.L."/>
            <person name="Howard P.J."/>
            <person name="Howden P.J."/>
            <person name="Huckle E."/>
            <person name="Johnson C."/>
            <person name="Johnson D."/>
            <person name="Joy A.A."/>
            <person name="Kay M."/>
            <person name="Keenan S."/>
            <person name="Kershaw J.K."/>
            <person name="Kimberley A.M."/>
            <person name="King A."/>
            <person name="Knights A."/>
            <person name="Laird G.K."/>
            <person name="Langford C."/>
            <person name="Lawlor S."/>
            <person name="Leongamornlert D.A."/>
            <person name="Leversha M."/>
            <person name="Lloyd C."/>
            <person name="Lloyd D.M."/>
            <person name="Lovell J."/>
            <person name="Martin S."/>
            <person name="Mashreghi-Mohammadi M."/>
            <person name="Matthews L."/>
            <person name="McLaren S."/>
            <person name="McLay K.E."/>
            <person name="McMurray A."/>
            <person name="Milne S."/>
            <person name="Nickerson T."/>
            <person name="Nisbett J."/>
            <person name="Nordsiek G."/>
            <person name="Pearce A.V."/>
            <person name="Peck A.I."/>
            <person name="Porter K.M."/>
            <person name="Pandian R."/>
            <person name="Pelan S."/>
            <person name="Phillimore B."/>
            <person name="Povey S."/>
            <person name="Ramsey Y."/>
            <person name="Rand V."/>
            <person name="Scharfe M."/>
            <person name="Sehra H.K."/>
            <person name="Shownkeen R."/>
            <person name="Sims S.K."/>
            <person name="Skuce C.D."/>
            <person name="Smith M."/>
            <person name="Steward C.A."/>
            <person name="Swarbreck D."/>
            <person name="Sycamore N."/>
            <person name="Tester J."/>
            <person name="Thorpe A."/>
            <person name="Tracey A."/>
            <person name="Tromans A."/>
            <person name="Thomas D.W."/>
            <person name="Wall M."/>
            <person name="Wallis J.M."/>
            <person name="West A.P."/>
            <person name="Whitehead S.L."/>
            <person name="Willey D.L."/>
            <person name="Williams S.A."/>
            <person name="Wilming L."/>
            <person name="Wray P.W."/>
            <person name="Young L."/>
            <person name="Ashurst J.L."/>
            <person name="Coulson A."/>
            <person name="Blocker H."/>
            <person name="Durbin R.M."/>
            <person name="Sulston J.E."/>
            <person name="Hubbard T."/>
            <person name="Jackson M.J."/>
            <person name="Bentley D.R."/>
            <person name="Beck S."/>
            <person name="Rogers J."/>
            <person name="Dunham I."/>
        </authorList>
    </citation>
    <scope>NUCLEOTIDE SEQUENCE [LARGE SCALE GENOMIC DNA]</scope>
</reference>
<reference key="5">
    <citation type="journal article" date="2004" name="Genome Res.">
        <title>The status, quality, and expansion of the NIH full-length cDNA project: the Mammalian Gene Collection (MGC).</title>
        <authorList>
            <consortium name="The MGC Project Team"/>
        </authorList>
    </citation>
    <scope>NUCLEOTIDE SEQUENCE [LARGE SCALE MRNA] (ISOFORM 2)</scope>
    <scope>VARIANT LEU-226</scope>
    <source>
        <tissue>Testis</tissue>
    </source>
</reference>
<reference key="6">
    <citation type="journal article" date="2004" name="J. Mol. Med.">
        <title>Sperm membrane protein (hSMP-1) and RanBPM complex in the microtubule-organizing centre.</title>
        <authorList>
            <person name="Tang X."/>
            <person name="Zhang J."/>
            <person name="Cai Y."/>
            <person name="Miao S.Y."/>
            <person name="Zong S."/>
            <person name="Koide S.S."/>
            <person name="Wang L.F."/>
        </authorList>
    </citation>
    <scope>INTERACTION WITH RANBP9</scope>
    <scope>SUBCELLULAR LOCATION</scope>
    <source>
        <tissue>Testis</tissue>
    </source>
</reference>
<reference key="7">
    <citation type="journal article" date="2007" name="Asian J. Androl.">
        <title>Inhibition of mouse acrosome reaction and sperm-zona pellucida binding by anti-human sperm membrane protein 1 antibody.</title>
        <authorList>
            <person name="Cheng G.Y."/>
            <person name="Shi J.L."/>
            <person name="Wang M."/>
            <person name="Hu Y.Q."/>
            <person name="Liu C.M."/>
            <person name="Wang Y.F."/>
            <person name="Xu C."/>
        </authorList>
    </citation>
    <scope>SUBCELLULAR LOCATION</scope>
</reference>
<reference key="8">
    <citation type="journal article" date="2009" name="Cell Biochem. Funct.">
        <title>Regulation of the G2/M phase of the cell cycle by sperm associated antigen 8 (SPAG8) protein.</title>
        <authorList>
            <person name="Li R."/>
            <person name="Tang X.L."/>
            <person name="Miao S.Y."/>
            <person name="Zong S.D."/>
            <person name="Wang L.F."/>
        </authorList>
    </citation>
    <scope>FUNCTION</scope>
    <scope>SUBCELLULAR LOCATION</scope>
</reference>
<reference key="9">
    <citation type="journal article" date="2024" name="Nat. Commun.">
        <title>Uncovering structural themes across cilia microtubule inner proteins with implications for human cilia function.</title>
        <authorList>
            <person name="Andersen J.S."/>
            <person name="Vijayakumaran A."/>
            <person name="Godbehere C."/>
            <person name="Lorentzen E."/>
            <person name="Mennella V."/>
            <person name="Schou K.B."/>
        </authorList>
    </citation>
    <scope>IDENTIFICATION OF MN REGIONS</scope>
</reference>
<reference evidence="14" key="10">
    <citation type="journal article" date="2022" name="Proc. Natl. Acad. Sci. U.S.A.">
        <title>SPACA9 is a lumenal protein of human ciliary singlet and doublet microtubules.</title>
        <authorList>
            <person name="Gui M."/>
            <person name="Croft J.T."/>
            <person name="Zabeo D."/>
            <person name="Acharya V."/>
            <person name="Kollman J.M."/>
            <person name="Burgoyne T."/>
            <person name="Hoog J.L."/>
            <person name="Brown A."/>
        </authorList>
    </citation>
    <scope>STRUCTURE BY ELECTRON MICROSCOPY (3.60 ANGSTROMS)</scope>
    <scope>FUNCTION</scope>
    <scope>SUBCELLULAR LOCATION</scope>
    <scope>TISSUE SPECIFICITY</scope>
</reference>
<evidence type="ECO:0000250" key="1">
    <source>
        <dbReference type="UniProtKB" id="E1BNS6"/>
    </source>
</evidence>
<evidence type="ECO:0000250" key="2">
    <source>
        <dbReference type="UniProtKB" id="Q3V0Q6"/>
    </source>
</evidence>
<evidence type="ECO:0000256" key="3">
    <source>
        <dbReference type="SAM" id="MobiDB-lite"/>
    </source>
</evidence>
<evidence type="ECO:0000269" key="4">
    <source>
    </source>
</evidence>
<evidence type="ECO:0000269" key="5">
    <source>
    </source>
</evidence>
<evidence type="ECO:0000269" key="6">
    <source>
    </source>
</evidence>
<evidence type="ECO:0000269" key="7">
    <source>
    </source>
</evidence>
<evidence type="ECO:0000269" key="8">
    <source>
    </source>
</evidence>
<evidence type="ECO:0000269" key="9">
    <source>
    </source>
</evidence>
<evidence type="ECO:0000269" key="10">
    <source>
    </source>
</evidence>
<evidence type="ECO:0000305" key="11"/>
<evidence type="ECO:0000305" key="12">
    <source>
    </source>
</evidence>
<evidence type="ECO:0000312" key="13">
    <source>
        <dbReference type="HGNC" id="HGNC:14105"/>
    </source>
</evidence>
<evidence type="ECO:0007744" key="14">
    <source>
        <dbReference type="PDB" id="7UNG"/>
    </source>
</evidence>
<protein>
    <recommendedName>
        <fullName>Sperm-associated antigen 8</fullName>
    </recommendedName>
    <alternativeName>
        <fullName>HSD-1</fullName>
    </alternativeName>
    <alternativeName>
        <fullName>Sperm membrane protein 1</fullName>
        <shortName>SMP-1</shortName>
    </alternativeName>
    <alternativeName>
        <fullName>Sperm membrane protein BS-84</fullName>
    </alternativeName>
</protein>
<organism>
    <name type="scientific">Homo sapiens</name>
    <name type="common">Human</name>
    <dbReference type="NCBI Taxonomy" id="9606"/>
    <lineage>
        <taxon>Eukaryota</taxon>
        <taxon>Metazoa</taxon>
        <taxon>Chordata</taxon>
        <taxon>Craniata</taxon>
        <taxon>Vertebrata</taxon>
        <taxon>Euteleostomi</taxon>
        <taxon>Mammalia</taxon>
        <taxon>Eutheria</taxon>
        <taxon>Euarchontoglires</taxon>
        <taxon>Primates</taxon>
        <taxon>Haplorrhini</taxon>
        <taxon>Catarrhini</taxon>
        <taxon>Hominidae</taxon>
        <taxon>Homo</taxon>
    </lineage>
</organism>
<comment type="function">
    <text evidence="2 4 8 9">Microtubule inner protein (MIP) part of the dynein-decorated doublet microtubules (DMTs) in cilia axoneme, which is required for motile cilia beating (PubMed:36191189). Plays a role in spermatogenesis by enhancing the binding of CREM isoform tau to its coactivator FHL5 and increasing the FHL5-regulated transcriptional activation of CREM isoform tau (By similarity). Involved in the acrosome reaction and in binding of sperm to the zona pellucida (By similarity). Plays a role in regulation of the cell cycle by controlling progression through the G2/M phase, possibly by delaying the activation of CDK1 which is required for entry into mitosis (PubMed:19548270). May play a role in fertility and microtubule formation through interaction with RANBP9 (PubMed:10500252).</text>
</comment>
<comment type="subunit">
    <text evidence="2 5">Microtubule inner protein component of sperm flagellar doublet microtubules. Interacts with FHL5 (via second LIM domain) (By similarity). Interacts with RANBP9 (PubMed:15014887).</text>
</comment>
<comment type="interaction">
    <interactant intactId="EBI-954419">
        <id>Q99932</id>
    </interactant>
    <interactant intactId="EBI-711360">
        <id>P33240</id>
        <label>CSTF2</label>
    </interactant>
    <organismsDiffer>false</organismsDiffer>
    <experiments>3</experiments>
</comment>
<comment type="interaction">
    <interactant intactId="EBI-954419">
        <id>Q99932</id>
    </interactant>
    <interactant intactId="EBI-740376">
        <id>Q86UW9</id>
        <label>DTX2</label>
    </interactant>
    <organismsDiffer>false</organismsDiffer>
    <experiments>3</experiments>
</comment>
<comment type="interaction">
    <interactant intactId="EBI-954419">
        <id>Q99932</id>
    </interactant>
    <interactant intactId="EBI-10247181">
        <id>Q5THT1</id>
        <label>KLHL32</label>
    </interactant>
    <organismsDiffer>false</organismsDiffer>
    <experiments>3</experiments>
</comment>
<comment type="interaction">
    <interactant intactId="EBI-954419">
        <id>Q99932</id>
    </interactant>
    <interactant intactId="EBI-10246938">
        <id>Q5TAL4</id>
        <label>SNRPC</label>
    </interactant>
    <organismsDiffer>false</organismsDiffer>
    <experiments>3</experiments>
</comment>
<comment type="interaction">
    <interactant intactId="EBI-11959123">
        <id>Q99932-2</id>
    </interactant>
    <interactant intactId="EBI-11976299">
        <id>Q5BKX5-3</id>
        <label>ACTMAP</label>
    </interactant>
    <organismsDiffer>false</organismsDiffer>
    <experiments>4</experiments>
</comment>
<comment type="interaction">
    <interactant intactId="EBI-11959123">
        <id>Q99932-2</id>
    </interactant>
    <interactant intactId="EBI-77613">
        <id>P05067</id>
        <label>APP</label>
    </interactant>
    <organismsDiffer>false</organismsDiffer>
    <experiments>3</experiments>
</comment>
<comment type="interaction">
    <interactant intactId="EBI-11959123">
        <id>Q99932-2</id>
    </interactant>
    <interactant intactId="EBI-17264467">
        <id>P05067-2</id>
        <label>APP</label>
    </interactant>
    <organismsDiffer>false</organismsDiffer>
    <experiments>3</experiments>
</comment>
<comment type="interaction">
    <interactant intactId="EBI-11959123">
        <id>Q99932-2</id>
    </interactant>
    <interactant intactId="EBI-6425121">
        <id>Q96C12</id>
        <label>ARMC5</label>
    </interactant>
    <organismsDiffer>false</organismsDiffer>
    <experiments>3</experiments>
</comment>
<comment type="interaction">
    <interactant intactId="EBI-11959123">
        <id>Q99932-2</id>
    </interactant>
    <interactant intactId="EBI-930964">
        <id>P54253</id>
        <label>ATXN1</label>
    </interactant>
    <organismsDiffer>false</organismsDiffer>
    <experiments>6</experiments>
</comment>
<comment type="interaction">
    <interactant intactId="EBI-11959123">
        <id>Q99932-2</id>
    </interactant>
    <interactant intactId="EBI-946046">
        <id>P54252</id>
        <label>ATXN3</label>
    </interactant>
    <organismsDiffer>false</organismsDiffer>
    <experiments>6</experiments>
</comment>
<comment type="interaction">
    <interactant intactId="EBI-11959123">
        <id>Q99932-2</id>
    </interactant>
    <interactant intactId="EBI-6958971">
        <id>Q9BPU9</id>
        <label>B9D2</label>
    </interactant>
    <organismsDiffer>false</organismsDiffer>
    <experiments>3</experiments>
</comment>
<comment type="interaction">
    <interactant intactId="EBI-11959123">
        <id>Q99932-2</id>
    </interactant>
    <interactant intactId="EBI-742695">
        <id>Q8N1L9</id>
        <label>BATF2</label>
    </interactant>
    <organismsDiffer>false</organismsDiffer>
    <experiments>3</experiments>
</comment>
<comment type="interaction">
    <interactant intactId="EBI-11959123">
        <id>Q99932-2</id>
    </interactant>
    <interactant intactId="EBI-11532900">
        <id>J3KQ12</id>
        <label>BSCL2</label>
    </interactant>
    <organismsDiffer>false</organismsDiffer>
    <experiments>3</experiments>
</comment>
<comment type="interaction">
    <interactant intactId="EBI-11959123">
        <id>Q99932-2</id>
    </interactant>
    <interactant intactId="EBI-744556">
        <id>Q96HB5</id>
        <label>CCDC120</label>
    </interactant>
    <organismsDiffer>false</organismsDiffer>
    <experiments>3</experiments>
</comment>
<comment type="interaction">
    <interactant intactId="EBI-11959123">
        <id>Q99932-2</id>
    </interactant>
    <interactant intactId="EBI-395261">
        <id>P24863</id>
        <label>CCNC</label>
    </interactant>
    <organismsDiffer>false</organismsDiffer>
    <experiments>3</experiments>
</comment>
<comment type="interaction">
    <interactant intactId="EBI-11959123">
        <id>Q99932-2</id>
    </interactant>
    <interactant intactId="EBI-355710">
        <id>P48643</id>
        <label>CCT5</label>
    </interactant>
    <organismsDiffer>false</organismsDiffer>
    <experiments>3</experiments>
</comment>
<comment type="interaction">
    <interactant intactId="EBI-11959123">
        <id>Q99932-2</id>
    </interactant>
    <interactant intactId="EBI-396137">
        <id>Q9UJX2</id>
        <label>CDC23</label>
    </interactant>
    <organismsDiffer>false</organismsDiffer>
    <experiments>3</experiments>
</comment>
<comment type="interaction">
    <interactant intactId="EBI-11959123">
        <id>Q99932-2</id>
    </interactant>
    <interactant intactId="EBI-9038570">
        <id>P27918</id>
        <label>CFP</label>
    </interactant>
    <organismsDiffer>false</organismsDiffer>
    <experiments>4</experiments>
</comment>
<comment type="interaction">
    <interactant intactId="EBI-11959123">
        <id>Q99932-2</id>
    </interactant>
    <interactant intactId="EBI-1045797">
        <id>Q8N5K1</id>
        <label>CISD2</label>
    </interactant>
    <organismsDiffer>false</organismsDiffer>
    <experiments>3</experiments>
</comment>
<comment type="interaction">
    <interactant intactId="EBI-11959123">
        <id>Q99932-2</id>
    </interactant>
    <interactant intactId="EBI-711360">
        <id>P33240</id>
        <label>CSTF2</label>
    </interactant>
    <organismsDiffer>false</organismsDiffer>
    <experiments>3</experiments>
</comment>
<comment type="interaction">
    <interactant intactId="EBI-11959123">
        <id>Q99932-2</id>
    </interactant>
    <interactant intactId="EBI-747012">
        <id>Q9H0L4</id>
        <label>CSTF2T</label>
    </interactant>
    <organismsDiffer>false</organismsDiffer>
    <experiments>3</experiments>
</comment>
<comment type="interaction">
    <interactant intactId="EBI-11959123">
        <id>Q99932-2</id>
    </interactant>
    <interactant intactId="EBI-1188472">
        <id>P78358</id>
        <label>CTAG1B</label>
    </interactant>
    <organismsDiffer>false</organismsDiffer>
    <experiments>5</experiments>
</comment>
<comment type="interaction">
    <interactant intactId="EBI-11959123">
        <id>Q99932-2</id>
    </interactant>
    <interactant intactId="EBI-25840379">
        <id>Q14203-5</id>
        <label>DCTN1</label>
    </interactant>
    <organismsDiffer>false</organismsDiffer>
    <experiments>3</experiments>
</comment>
<comment type="interaction">
    <interactant intactId="EBI-11959123">
        <id>Q99932-2</id>
    </interactant>
    <interactant intactId="EBI-9679045">
        <id>Q9NQL9</id>
        <label>DMRT3</label>
    </interactant>
    <organismsDiffer>false</organismsDiffer>
    <experiments>3</experiments>
</comment>
<comment type="interaction">
    <interactant intactId="EBI-11959123">
        <id>Q99932-2</id>
    </interactant>
    <interactant intactId="EBI-10976677">
        <id>G5E9A7</id>
        <label>DMWD</label>
    </interactant>
    <organismsDiffer>false</organismsDiffer>
    <experiments>3</experiments>
</comment>
<comment type="interaction">
    <interactant intactId="EBI-11959123">
        <id>Q99932-2</id>
    </interactant>
    <interactant intactId="EBI-10694655">
        <id>Q7L591-3</id>
        <label>DOK3</label>
    </interactant>
    <organismsDiffer>false</organismsDiffer>
    <experiments>3</experiments>
</comment>
<comment type="interaction">
    <interactant intactId="EBI-11959123">
        <id>Q99932-2</id>
    </interactant>
    <interactant intactId="EBI-742371">
        <id>Q96FJ2</id>
        <label>DYNLL2</label>
    </interactant>
    <organismsDiffer>false</organismsDiffer>
    <experiments>3</experiments>
</comment>
<comment type="interaction">
    <interactant intactId="EBI-11959123">
        <id>Q99932-2</id>
    </interactant>
    <interactant intactId="EBI-949532">
        <id>Q9UHF1</id>
        <label>EGFL7</label>
    </interactant>
    <organismsDiffer>false</organismsDiffer>
    <experiments>3</experiments>
</comment>
<comment type="interaction">
    <interactant intactId="EBI-11959123">
        <id>Q99932-2</id>
    </interactant>
    <interactant intactId="EBI-12193763">
        <id>A1KXE4-2</id>
        <label>FAM168B</label>
    </interactant>
    <organismsDiffer>false</organismsDiffer>
    <experiments>3</experiments>
</comment>
<comment type="interaction">
    <interactant intactId="EBI-11959123">
        <id>Q99932-2</id>
    </interactant>
    <interactant intactId="EBI-2807642">
        <id>Q8WU58</id>
        <label>FAM222B</label>
    </interactant>
    <organismsDiffer>false</organismsDiffer>
    <experiments>3</experiments>
</comment>
<comment type="interaction">
    <interactant intactId="EBI-11959123">
        <id>Q99932-2</id>
    </interactant>
    <interactant intactId="EBI-725515">
        <id>O43559</id>
        <label>FRS3</label>
    </interactant>
    <organismsDiffer>false</organismsDiffer>
    <experiments>3</experiments>
</comment>
<comment type="interaction">
    <interactant intactId="EBI-11959123">
        <id>Q99932-2</id>
    </interactant>
    <interactant intactId="EBI-724143">
        <id>P41250</id>
        <label>GARS1</label>
    </interactant>
    <organismsDiffer>false</organismsDiffer>
    <experiments>3</experiments>
</comment>
<comment type="interaction">
    <interactant intactId="EBI-11959123">
        <id>Q99932-2</id>
    </interactant>
    <interactant intactId="EBI-947774">
        <id>O75420</id>
        <label>GIGYF1</label>
    </interactant>
    <organismsDiffer>false</organismsDiffer>
    <experiments>3</experiments>
</comment>
<comment type="interaction">
    <interactant intactId="EBI-11959123">
        <id>Q99932-2</id>
    </interactant>
    <interactant intactId="EBI-748515">
        <id>Q8IVS8</id>
        <label>GLYCTK</label>
    </interactant>
    <organismsDiffer>false</organismsDiffer>
    <experiments>3</experiments>
</comment>
<comment type="interaction">
    <interactant intactId="EBI-11959123">
        <id>Q99932-2</id>
    </interactant>
    <interactant intactId="EBI-347538">
        <id>Q9Y4H4</id>
        <label>GPSM3</label>
    </interactant>
    <organismsDiffer>false</organismsDiffer>
    <experiments>3</experiments>
</comment>
<comment type="interaction">
    <interactant intactId="EBI-11959123">
        <id>Q99932-2</id>
    </interactant>
    <interactant intactId="EBI-10329202">
        <id>Q9Y5R4</id>
        <label>HEMK1</label>
    </interactant>
    <organismsDiffer>false</organismsDiffer>
    <experiments>3</experiments>
</comment>
<comment type="interaction">
    <interactant intactId="EBI-11959123">
        <id>Q99932-2</id>
    </interactant>
    <interactant intactId="EBI-2880706">
        <id>O43593</id>
        <label>HR</label>
    </interactant>
    <organismsDiffer>false</organismsDiffer>
    <experiments>3</experiments>
</comment>
<comment type="interaction">
    <interactant intactId="EBI-11959123">
        <id>Q99932-2</id>
    </interactant>
    <interactant intactId="EBI-352682">
        <id>P04792</id>
        <label>HSPB1</label>
    </interactant>
    <organismsDiffer>false</organismsDiffer>
    <experiments>3</experiments>
</comment>
<comment type="interaction">
    <interactant intactId="EBI-11959123">
        <id>Q99932-2</id>
    </interactant>
    <interactant intactId="EBI-466029">
        <id>P42858</id>
        <label>HTT</label>
    </interactant>
    <organismsDiffer>false</organismsDiffer>
    <experiments>18</experiments>
</comment>
<comment type="interaction">
    <interactant intactId="EBI-11959123">
        <id>Q99932-2</id>
    </interactant>
    <interactant intactId="EBI-6509505">
        <id>Q0VD86</id>
        <label>INCA1</label>
    </interactant>
    <organismsDiffer>false</organismsDiffer>
    <experiments>3</experiments>
</comment>
<comment type="interaction">
    <interactant intactId="EBI-11959123">
        <id>Q99932-2</id>
    </interactant>
    <interactant intactId="EBI-748258">
        <id>Q5TA45</id>
        <label>INTS11</label>
    </interactant>
    <organismsDiffer>false</organismsDiffer>
    <experiments>3</experiments>
</comment>
<comment type="interaction">
    <interactant intactId="EBI-11959123">
        <id>Q99932-2</id>
    </interactant>
    <interactant intactId="EBI-10975473">
        <id>O60333-2</id>
        <label>KIF1B</label>
    </interactant>
    <organismsDiffer>false</organismsDiffer>
    <experiments>3</experiments>
</comment>
<comment type="interaction">
    <interactant intactId="EBI-11959123">
        <id>Q99932-2</id>
    </interactant>
    <interactant intactId="EBI-1047093">
        <id>O76011</id>
        <label>KRT34</label>
    </interactant>
    <organismsDiffer>false</organismsDiffer>
    <experiments>3</experiments>
</comment>
<comment type="interaction">
    <interactant intactId="EBI-11959123">
        <id>Q99932-2</id>
    </interactant>
    <interactant intactId="EBI-10171774">
        <id>P60410</id>
        <label>KRTAP10-8</label>
    </interactant>
    <organismsDiffer>false</organismsDiffer>
    <experiments>3</experiments>
</comment>
<comment type="interaction">
    <interactant intactId="EBI-11959123">
        <id>Q99932-2</id>
    </interactant>
    <interactant intactId="EBI-1052037">
        <id>Q8IUC1</id>
        <label>KRTAP11-1</label>
    </interactant>
    <organismsDiffer>false</organismsDiffer>
    <experiments>3</experiments>
</comment>
<comment type="interaction">
    <interactant intactId="EBI-11959123">
        <id>Q99932-2</id>
    </interactant>
    <interactant intactId="EBI-10241252">
        <id>Q3SY46</id>
        <label>KRTAP13-3</label>
    </interactant>
    <organismsDiffer>false</organismsDiffer>
    <experiments>3</experiments>
</comment>
<comment type="interaction">
    <interactant intactId="EBI-11959123">
        <id>Q99932-2</id>
    </interactant>
    <interactant intactId="EBI-11992140">
        <id>Q3LI76</id>
        <label>KRTAP15-1</label>
    </interactant>
    <organismsDiffer>false</organismsDiffer>
    <experiments>3</experiments>
</comment>
<comment type="interaction">
    <interactant intactId="EBI-11959123">
        <id>Q99932-2</id>
    </interactant>
    <interactant intactId="EBI-12196745">
        <id>Q3LHN2</id>
        <label>KRTAP19-2</label>
    </interactant>
    <organismsDiffer>false</organismsDiffer>
    <experiments>3</experiments>
</comment>
<comment type="interaction">
    <interactant intactId="EBI-11959123">
        <id>Q99932-2</id>
    </interactant>
    <interactant intactId="EBI-12805508">
        <id>Q3LI70</id>
        <label>KRTAP19-6</label>
    </interactant>
    <organismsDiffer>false</organismsDiffer>
    <experiments>3</experiments>
</comment>
<comment type="interaction">
    <interactant intactId="EBI-11959123">
        <id>Q99932-2</id>
    </interactant>
    <interactant intactId="EBI-10241353">
        <id>Q3SYF9</id>
        <label>KRTAP19-7</label>
    </interactant>
    <organismsDiffer>false</organismsDiffer>
    <experiments>3</experiments>
</comment>
<comment type="interaction">
    <interactant intactId="EBI-11959123">
        <id>Q99932-2</id>
    </interactant>
    <interactant intactId="EBI-18395721">
        <id>Q3LI59</id>
        <label>KRTAP21-2</label>
    </interactant>
    <organismsDiffer>false</organismsDiffer>
    <experiments>3</experiments>
</comment>
<comment type="interaction">
    <interactant intactId="EBI-11959123">
        <id>Q99932-2</id>
    </interactant>
    <interactant intactId="EBI-3957672">
        <id>Q6PEX3</id>
        <label>KRTAP26-1</label>
    </interactant>
    <organismsDiffer>false</organismsDiffer>
    <experiments>3</experiments>
</comment>
<comment type="interaction">
    <interactant intactId="EBI-11959123">
        <id>Q99932-2</id>
    </interactant>
    <interactant intactId="EBI-9996449">
        <id>Q9BYR8</id>
        <label>KRTAP3-1</label>
    </interactant>
    <organismsDiffer>false</organismsDiffer>
    <experiments>3</experiments>
</comment>
<comment type="interaction">
    <interactant intactId="EBI-11959123">
        <id>Q99932-2</id>
    </interactant>
    <interactant intactId="EBI-11962084">
        <id>Q3LI66</id>
        <label>KRTAP6-2</label>
    </interactant>
    <organismsDiffer>false</organismsDiffer>
    <experiments>5</experiments>
</comment>
<comment type="interaction">
    <interactant intactId="EBI-11959123">
        <id>Q99932-2</id>
    </interactant>
    <interactant intactId="EBI-18394498">
        <id>Q8IUC3</id>
        <label>KRTAP7-1</label>
    </interactant>
    <organismsDiffer>false</organismsDiffer>
    <experiments>3</experiments>
</comment>
<comment type="interaction">
    <interactant intactId="EBI-11959123">
        <id>Q99932-2</id>
    </interactant>
    <interactant intactId="EBI-9088686">
        <id>Q14847-2</id>
        <label>LASP1</label>
    </interactant>
    <organismsDiffer>false</organismsDiffer>
    <experiments>3</experiments>
</comment>
<comment type="interaction">
    <interactant intactId="EBI-11959123">
        <id>Q99932-2</id>
    </interactant>
    <interactant intactId="EBI-2864512">
        <id>P50221</id>
        <label>MEOX1</label>
    </interactant>
    <organismsDiffer>false</organismsDiffer>
    <experiments>3</experiments>
</comment>
<comment type="interaction">
    <interactant intactId="EBI-11959123">
        <id>Q99932-2</id>
    </interactant>
    <interactant intactId="EBI-10174029">
        <id>A6NJ78-4</id>
        <label>METTL15</label>
    </interactant>
    <organismsDiffer>false</organismsDiffer>
    <experiments>3</experiments>
</comment>
<comment type="interaction">
    <interactant intactId="EBI-11959123">
        <id>Q99932-2</id>
    </interactant>
    <interactant intactId="EBI-716486">
        <id>Q92597</id>
        <label>NDRG1</label>
    </interactant>
    <organismsDiffer>false</organismsDiffer>
    <experiments>3</experiments>
</comment>
<comment type="interaction">
    <interactant intactId="EBI-11959123">
        <id>Q99932-2</id>
    </interactant>
    <interactant intactId="EBI-748312">
        <id>P49821</id>
        <label>NDUFV1</label>
    </interactant>
    <organismsDiffer>false</organismsDiffer>
    <experiments>3</experiments>
</comment>
<comment type="interaction">
    <interactant intactId="EBI-11959123">
        <id>Q99932-2</id>
    </interactant>
    <interactant intactId="EBI-475646">
        <id>P07196</id>
        <label>NEFL</label>
    </interactant>
    <organismsDiffer>false</organismsDiffer>
    <experiments>3</experiments>
</comment>
<comment type="interaction">
    <interactant intactId="EBI-11959123">
        <id>Q99932-2</id>
    </interactant>
    <interactant intactId="EBI-12868744">
        <id>P0CG21</id>
        <label>NHLRC4</label>
    </interactant>
    <organismsDiffer>false</organismsDiffer>
    <experiments>3</experiments>
</comment>
<comment type="interaction">
    <interactant intactId="EBI-11959123">
        <id>Q99932-2</id>
    </interactant>
    <interactant intactId="EBI-355720">
        <id>O43809</id>
        <label>NUDT21</label>
    </interactant>
    <organismsDiffer>false</organismsDiffer>
    <experiments>3</experiments>
</comment>
<comment type="interaction">
    <interactant intactId="EBI-11959123">
        <id>Q99932-2</id>
    </interactant>
    <interactant intactId="EBI-11022007">
        <id>Q9HBE1-4</id>
        <label>PATZ1</label>
    </interactant>
    <organismsDiffer>false</organismsDiffer>
    <experiments>3</experiments>
</comment>
<comment type="interaction">
    <interactant intactId="EBI-11959123">
        <id>Q99932-2</id>
    </interactant>
    <interactant intactId="EBI-724639">
        <id>Q9UBV8</id>
        <label>PEF1</label>
    </interactant>
    <organismsDiffer>false</organismsDiffer>
    <experiments>3</experiments>
</comment>
<comment type="interaction">
    <interactant intactId="EBI-11959123">
        <id>Q99932-2</id>
    </interactant>
    <interactant intactId="EBI-25882083">
        <id>O00628-2</id>
        <label>PEX7</label>
    </interactant>
    <organismsDiffer>false</organismsDiffer>
    <experiments>3</experiments>
</comment>
<comment type="interaction">
    <interactant intactId="EBI-11959123">
        <id>Q99932-2</id>
    </interactant>
    <interactant intactId="EBI-357275">
        <id>Q99471</id>
        <label>PFDN5</label>
    </interactant>
    <organismsDiffer>false</organismsDiffer>
    <experiments>3</experiments>
</comment>
<comment type="interaction">
    <interactant intactId="EBI-11959123">
        <id>Q99932-2</id>
    </interactant>
    <interactant intactId="EBI-530034">
        <id>O43189</id>
        <label>PHF1</label>
    </interactant>
    <organismsDiffer>false</organismsDiffer>
    <experiments>3</experiments>
</comment>
<comment type="interaction">
    <interactant intactId="EBI-11959123">
        <id>Q99932-2</id>
    </interactant>
    <interactant intactId="EBI-2846068">
        <id>Q9BXM7</id>
        <label>PINK1</label>
    </interactant>
    <organismsDiffer>false</organismsDiffer>
    <experiments>3</experiments>
</comment>
<comment type="interaction">
    <interactant intactId="EBI-11959123">
        <id>Q99932-2</id>
    </interactant>
    <interactant intactId="EBI-748265">
        <id>P78337</id>
        <label>PITX1</label>
    </interactant>
    <organismsDiffer>false</organismsDiffer>
    <experiments>4</experiments>
</comment>
<comment type="interaction">
    <interactant intactId="EBI-11959123">
        <id>Q99932-2</id>
    </interactant>
    <interactant intactId="EBI-726466">
        <id>O15496</id>
        <label>PLA2G10</label>
    </interactant>
    <organismsDiffer>false</organismsDiffer>
    <experiments>3</experiments>
</comment>
<comment type="interaction">
    <interactant intactId="EBI-11959123">
        <id>Q99932-2</id>
    </interactant>
    <interactant intactId="EBI-1237011">
        <id>P50897</id>
        <label>PPT1</label>
    </interactant>
    <organismsDiffer>false</organismsDiffer>
    <experiments>3</experiments>
</comment>
<comment type="interaction">
    <interactant intactId="EBI-11959123">
        <id>Q99932-2</id>
    </interactant>
    <interactant intactId="EBI-21251460">
        <id>O60260-5</id>
        <label>PRKN</label>
    </interactant>
    <organismsDiffer>false</organismsDiffer>
    <experiments>6</experiments>
</comment>
<comment type="interaction">
    <interactant intactId="EBI-11959123">
        <id>Q99932-2</id>
    </interactant>
    <interactant intactId="EBI-749195">
        <id>P60891</id>
        <label>PRPS1</label>
    </interactant>
    <organismsDiffer>false</organismsDiffer>
    <experiments>3</experiments>
</comment>
<comment type="interaction">
    <interactant intactId="EBI-11959123">
        <id>Q99932-2</id>
    </interactant>
    <interactant intactId="EBI-11986293">
        <id>P0CG20</id>
        <label>PRR35</label>
    </interactant>
    <organismsDiffer>false</organismsDiffer>
    <experiments>3</experiments>
</comment>
<comment type="interaction">
    <interactant intactId="EBI-11959123">
        <id>Q99932-2</id>
    </interactant>
    <interactant intactId="EBI-11047108">
        <id>P49768-2</id>
        <label>PSEN1</label>
    </interactant>
    <organismsDiffer>false</organismsDiffer>
    <experiments>6</experiments>
</comment>
<comment type="interaction">
    <interactant intactId="EBI-11959123">
        <id>Q99932-2</id>
    </interactant>
    <interactant intactId="EBI-12806054">
        <id>P10745</id>
        <label>RBP3</label>
    </interactant>
    <organismsDiffer>false</organismsDiffer>
    <experiments>3</experiments>
</comment>
<comment type="interaction">
    <interactant intactId="EBI-11959123">
        <id>Q99932-2</id>
    </interactant>
    <interactant intactId="EBI-12854608">
        <id>P57078-2</id>
        <label>RIPK4</label>
    </interactant>
    <organismsDiffer>false</organismsDiffer>
    <experiments>3</experiments>
</comment>
<comment type="interaction">
    <interactant intactId="EBI-11959123">
        <id>Q99932-2</id>
    </interactant>
    <interactant intactId="EBI-396669">
        <id>Q9Y3C5</id>
        <label>RNF11</label>
    </interactant>
    <organismsDiffer>false</organismsDiffer>
    <experiments>3</experiments>
</comment>
<comment type="interaction">
    <interactant intactId="EBI-11959123">
        <id>Q99932-2</id>
    </interactant>
    <interactant intactId="EBI-6257312">
        <id>Q9BVN2</id>
        <label>RUSC1</label>
    </interactant>
    <organismsDiffer>false</organismsDiffer>
    <experiments>3</experiments>
</comment>
<comment type="interaction">
    <interactant intactId="EBI-11959123">
        <id>Q99932-2</id>
    </interactant>
    <interactant intactId="EBI-465368">
        <id>Q9UGK8</id>
        <label>SERGEF</label>
    </interactant>
    <organismsDiffer>false</organismsDiffer>
    <experiments>3</experiments>
</comment>
<comment type="interaction">
    <interactant intactId="EBI-11959123">
        <id>Q99932-2</id>
    </interactant>
    <interactant intactId="EBI-12275818">
        <id>Q53HV7-2</id>
        <label>SMUG1</label>
    </interactant>
    <organismsDiffer>false</organismsDiffer>
    <experiments>3</experiments>
</comment>
<comment type="interaction">
    <interactant intactId="EBI-11959123">
        <id>Q99932-2</id>
    </interactant>
    <interactant intactId="EBI-8463848">
        <id>Q8NB12</id>
        <label>SMYD1</label>
    </interactant>
    <organismsDiffer>false</organismsDiffer>
    <experiments>3</experiments>
</comment>
<comment type="interaction">
    <interactant intactId="EBI-11959123">
        <id>Q99932-2</id>
    </interactant>
    <interactant intactId="EBI-985879">
        <id>P37840</id>
        <label>SNCA</label>
    </interactant>
    <organismsDiffer>false</organismsDiffer>
    <experiments>3</experiments>
</comment>
<comment type="interaction">
    <interactant intactId="EBI-11959123">
        <id>Q99932-2</id>
    </interactant>
    <interactant intactId="EBI-372475">
        <id>P14678-2</id>
        <label>SNRPB</label>
    </interactant>
    <organismsDiffer>false</organismsDiffer>
    <experiments>3</experiments>
</comment>
<comment type="interaction">
    <interactant intactId="EBI-11959123">
        <id>Q99932-2</id>
    </interactant>
    <interactant intactId="EBI-766589">
        <id>P09234</id>
        <label>SNRPC</label>
    </interactant>
    <organismsDiffer>false</organismsDiffer>
    <experiments>3</experiments>
</comment>
<comment type="interaction">
    <interactant intactId="EBI-11959123">
        <id>Q99932-2</id>
    </interactant>
    <interactant intactId="EBI-5235340">
        <id>Q7Z699</id>
        <label>SPRED1</label>
    </interactant>
    <organismsDiffer>false</organismsDiffer>
    <experiments>3</experiments>
</comment>
<comment type="interaction">
    <interactant intactId="EBI-11959123">
        <id>Q99932-2</id>
    </interactant>
    <interactant intactId="EBI-2682386">
        <id>Q96PV0</id>
        <label>SYNGAP1</label>
    </interactant>
    <organismsDiffer>false</organismsDiffer>
    <experiments>3</experiments>
</comment>
<comment type="interaction">
    <interactant intactId="EBI-11959123">
        <id>Q99932-2</id>
    </interactant>
    <interactant intactId="EBI-372899">
        <id>Q13148</id>
        <label>TARDBP</label>
    </interactant>
    <organismsDiffer>false</organismsDiffer>
    <experiments>6</experiments>
</comment>
<comment type="interaction">
    <interactant intactId="EBI-11959123">
        <id>Q99932-2</id>
    </interactant>
    <interactant intactId="EBI-8644516">
        <id>Q9BXF9</id>
        <label>TEKT3</label>
    </interactant>
    <organismsDiffer>false</organismsDiffer>
    <experiments>4</experiments>
</comment>
<comment type="interaction">
    <interactant intactId="EBI-11959123">
        <id>Q99932-2</id>
    </interactant>
    <interactant intactId="EBI-10239812">
        <id>Q96M29</id>
        <label>TEKT5</label>
    </interactant>
    <organismsDiffer>false</organismsDiffer>
    <experiments>3</experiments>
</comment>
<comment type="interaction">
    <interactant intactId="EBI-11959123">
        <id>Q99932-2</id>
    </interactant>
    <interactant intactId="EBI-752030">
        <id>Q96A09</id>
        <label>TENT5B</label>
    </interactant>
    <organismsDiffer>false</organismsDiffer>
    <experiments>3</experiments>
</comment>
<comment type="interaction">
    <interactant intactId="EBI-11959123">
        <id>Q99932-2</id>
    </interactant>
    <interactant intactId="EBI-492476">
        <id>Q96RU7</id>
        <label>TRIB3</label>
    </interactant>
    <organismsDiffer>false</organismsDiffer>
    <experiments>3</experiments>
</comment>
<comment type="interaction">
    <interactant intactId="EBI-11959123">
        <id>Q99932-2</id>
    </interactant>
    <interactant intactId="EBI-5235829">
        <id>Q8IWZ5</id>
        <label>TRIM42</label>
    </interactant>
    <organismsDiffer>false</organismsDiffer>
    <experiments>5</experiments>
</comment>
<comment type="interaction">
    <interactant intactId="EBI-11959123">
        <id>Q99932-2</id>
    </interactant>
    <interactant intactId="EBI-12806590">
        <id>Q86WV8</id>
        <label>TSC1</label>
    </interactant>
    <organismsDiffer>false</organismsDiffer>
    <experiments>6</experiments>
</comment>
<comment type="interaction">
    <interactant intactId="EBI-11959123">
        <id>Q99932-2</id>
    </interactant>
    <interactant intactId="EBI-9090990">
        <id>Q5W5X9-3</id>
        <label>TTC23</label>
    </interactant>
    <organismsDiffer>false</organismsDiffer>
    <experiments>3</experiments>
</comment>
<comment type="interaction">
    <interactant intactId="EBI-11959123">
        <id>Q99932-2</id>
    </interactant>
    <interactant intactId="EBI-2514383">
        <id>Q5T6F2</id>
        <label>UBAP2</label>
    </interactant>
    <organismsDiffer>false</organismsDiffer>
    <experiments>3</experiments>
</comment>
<comment type="interaction">
    <interactant intactId="EBI-11959123">
        <id>Q99932-2</id>
    </interactant>
    <interactant intactId="EBI-741480">
        <id>Q9UMX0</id>
        <label>UBQLN1</label>
    </interactant>
    <organismsDiffer>false</organismsDiffer>
    <experiments>3</experiments>
</comment>
<comment type="interaction">
    <interactant intactId="EBI-11959123">
        <id>Q99932-2</id>
    </interactant>
    <interactant intactId="EBI-743272">
        <id>O75604</id>
        <label>USP2</label>
    </interactant>
    <organismsDiffer>false</organismsDiffer>
    <experiments>3</experiments>
</comment>
<comment type="interaction">
    <interactant intactId="EBI-11959123">
        <id>Q99932-2</id>
    </interactant>
    <interactant intactId="EBI-2559305">
        <id>A5D8V6</id>
        <label>VPS37C</label>
    </interactant>
    <organismsDiffer>false</organismsDiffer>
    <experiments>3</experiments>
</comment>
<comment type="interaction">
    <interactant intactId="EBI-11959123">
        <id>Q99932-2</id>
    </interactant>
    <interactant intactId="EBI-720609">
        <id>O76024</id>
        <label>WFS1</label>
    </interactant>
    <organismsDiffer>false</organismsDiffer>
    <experiments>3</experiments>
</comment>
<comment type="interaction">
    <interactant intactId="EBI-11959123">
        <id>Q99932-2</id>
    </interactant>
    <interactant intactId="EBI-1048893">
        <id>P54577</id>
        <label>YARS1</label>
    </interactant>
    <organismsDiffer>false</organismsDiffer>
    <experiments>3</experiments>
</comment>
<comment type="interaction">
    <interactant intactId="EBI-11959123">
        <id>Q99932-2</id>
    </interactant>
    <interactant intactId="EBI-10188476">
        <id>A0A0C4DGF1</id>
        <label>ZBTB32</label>
    </interactant>
    <organismsDiffer>false</organismsDiffer>
    <experiments>7</experiments>
</comment>
<comment type="interaction">
    <interactant intactId="EBI-11959123">
        <id>Q99932-2</id>
    </interactant>
    <interactant intactId="EBI-11963196">
        <id>Q15915</id>
        <label>ZIC1</label>
    </interactant>
    <organismsDiffer>false</organismsDiffer>
    <experiments>5</experiments>
</comment>
<comment type="interaction">
    <interactant intactId="EBI-11959123">
        <id>Q99932-2</id>
    </interactant>
    <interactant intactId="EBI-745520">
        <id>Q9P0T4</id>
        <label>ZNF581</label>
    </interactant>
    <organismsDiffer>false</organismsDiffer>
    <experiments>3</experiments>
</comment>
<comment type="subcellular location">
    <subcellularLocation>
        <location evidence="2">Cytoplasm</location>
    </subcellularLocation>
    <subcellularLocation>
        <location evidence="2">Nucleus</location>
    </subcellularLocation>
    <subcellularLocation>
        <location evidence="5 7 10">Cytoplasmic vesicle</location>
        <location evidence="5 7 10">Secretory vesicle</location>
        <location evidence="5 7 10">Acrosome</location>
    </subcellularLocation>
    <subcellularLocation>
        <location evidence="8">Cytoplasm</location>
        <location evidence="8">Cytoskeleton</location>
        <location evidence="8">Microtubule organizing center</location>
    </subcellularLocation>
    <subcellularLocation>
        <location evidence="8">Cytoplasm</location>
        <location evidence="8">Cytoskeleton</location>
        <location evidence="8">Spindle</location>
    </subcellularLocation>
    <subcellularLocation>
        <location evidence="9">Cytoplasm</location>
        <location evidence="9">Cytoskeleton</location>
        <location evidence="9">Cilium axoneme</location>
    </subcellularLocation>
    <subcellularLocation>
        <location evidence="2">Cytoplasm</location>
        <location evidence="2">Cytoskeleton</location>
        <location evidence="2">Flagellum axoneme</location>
    </subcellularLocation>
    <text evidence="1 2 8">In mature sperm cells, detected in the acrosomal region of the head and in the middle piece of the tail (By similarity). Localized to the nucleus and cytoplasm of spermatocytes and round spermatids while, in elongating spermatids, expressed in the cytoplasm but not in the nucleus (By similarity). During the cell cycle, localized on the microtubule-organizing center (MTOC) during prophase. In metaphase, extends along spindle microtubules. In anaphase, detected on the astral microtubules and mid-zone. In telophase, remains at the mid-zone. After cytokinesis, returns to the MTOC (PubMed:19548270). Microtubule inner protein (MIP) part of the dynein-decorated doublet microtubules (DMTs) in cilia axoneme (By similarity).</text>
</comment>
<comment type="alternative products">
    <event type="alternative splicing"/>
    <isoform>
        <id>Q99932-3</id>
        <name>3</name>
        <sequence type="displayed"/>
    </isoform>
    <isoform>
        <id>Q99932-1</id>
        <name>1</name>
        <sequence type="described" ref="VSP_059991 VSP_059992"/>
    </isoform>
    <isoform>
        <id>Q99932-2</id>
        <name>2</name>
        <sequence type="described" ref="VSP_059990"/>
    </isoform>
</comment>
<comment type="tissue specificity">
    <text evidence="9 10">Expressed in testis (germ cells), but not in liver, kidney, prostate and small intestine. Expressed in airway epithelial cells (PubMed:36191189).</text>
</comment>
<comment type="miscellaneous">
    <molecule>Isoform 1</molecule>
    <text evidence="11">May be produced at very low levels due to a premature stop codon in the mRNA, leading to nonsense-mediated mRNA decay.</text>
</comment>
<comment type="similarity">
    <text evidence="11">Belongs to the SPAG8 family.</text>
</comment>
<comment type="sequence caution" evidence="11">
    <conflict type="erroneous termination">
        <sequence resource="EMBL-CDS" id="AAB46833"/>
    </conflict>
    <text>Extended C-terminus.</text>
</comment>
<feature type="chain" id="PRO_0000072099" description="Sperm-associated antigen 8">
    <location>
        <begin position="1"/>
        <end position="485"/>
    </location>
</feature>
<feature type="region of interest" description="Disordered" evidence="3">
    <location>
        <begin position="1"/>
        <end position="42"/>
    </location>
</feature>
<feature type="region of interest" description="Disordered" evidence="3">
    <location>
        <begin position="75"/>
        <end position="98"/>
    </location>
</feature>
<feature type="region of interest" description="Disordered" evidence="3">
    <location>
        <begin position="127"/>
        <end position="215"/>
    </location>
</feature>
<feature type="region of interest" description="Mn 1" evidence="12">
    <location>
        <begin position="327"/>
        <end position="340"/>
    </location>
</feature>
<feature type="region of interest" description="Mn 2" evidence="12">
    <location>
        <begin position="379"/>
        <end position="393"/>
    </location>
</feature>
<feature type="compositionally biased region" description="Low complexity" evidence="3">
    <location>
        <begin position="132"/>
        <end position="150"/>
    </location>
</feature>
<feature type="compositionally biased region" description="Gly residues" evidence="3">
    <location>
        <begin position="151"/>
        <end position="191"/>
    </location>
</feature>
<feature type="splice variant" id="VSP_059990" description="In isoform 2.">
    <original>GVSNIRTLDTPFRKNCSFSTPVPLSLGKLLPYEPENYPYQLGEISSLPCPGGRLGGGGGRMTPF</original>
    <variation>TWWPLPTQVPAAEDYLTWKEWGFTGVQEVLSALLRATPGEYSVNICGMNEHPVCSRTWTNRLCHQEMGSKKTVTQEDRGW</variation>
    <location>
        <begin position="422"/>
        <end position="485"/>
    </location>
</feature>
<feature type="splice variant" id="VSP_059991" description="In isoform 1.">
    <original>GVSNI</original>
    <variation>VCEGD</variation>
    <location>
        <begin position="422"/>
        <end position="426"/>
    </location>
</feature>
<feature type="splice variant" id="VSP_059992" description="In isoform 1.">
    <location>
        <begin position="427"/>
        <end position="485"/>
    </location>
</feature>
<feature type="sequence variant" id="VAR_056992" description="In dbSNP:rs13299596.">
    <original>A</original>
    <variation>T</variation>
    <location>
        <position position="69"/>
    </location>
</feature>
<feature type="sequence variant" id="VAR_069166" description="In dbSNP:rs17851728." evidence="6">
    <original>P</original>
    <variation>L</variation>
    <location>
        <position position="226"/>
    </location>
</feature>
<feature type="sequence conflict" description="In Ref. 5; AAH19247." evidence="11" ref="5">
    <original>E</original>
    <variation>G</variation>
    <location>
        <position position="5"/>
    </location>
</feature>
<feature type="sequence conflict" description="In Ref. 3; BAG63651." evidence="11" ref="3">
    <original>T</original>
    <variation>A</variation>
    <location>
        <position position="48"/>
    </location>
</feature>
<feature type="sequence conflict" description="In Ref. 1; AAB46833." evidence="11" ref="1">
    <original>A</original>
    <variation>S</variation>
    <location>
        <position position="49"/>
    </location>
</feature>
<feature type="sequence conflict" description="In Ref. 3; BAG63651." evidence="11" ref="3">
    <location>
        <begin position="176"/>
        <end position="179"/>
    </location>
</feature>
<feature type="sequence conflict" description="In Ref. 1; AAB46833." evidence="11" ref="1">
    <original>M</original>
    <variation>Q</variation>
    <location>
        <position position="269"/>
    </location>
</feature>
<feature type="sequence conflict" description="In Ref. 1; AAB46833." evidence="11" ref="1">
    <original>K</original>
    <variation>T</variation>
    <location>
        <position position="322"/>
    </location>
</feature>
<feature type="sequence conflict" description="In Ref. 3; BAG63651." evidence="11" ref="3">
    <original>S</original>
    <variation>G</variation>
    <location>
        <position position="438"/>
    </location>
</feature>
<dbReference type="EMBL" id="S83157">
    <property type="protein sequence ID" value="AAB46833.1"/>
    <property type="status" value="ALT_SEQ"/>
    <property type="molecule type" value="mRNA"/>
</dbReference>
<dbReference type="EMBL" id="U12978">
    <property type="protein sequence ID" value="AAA21129.2"/>
    <property type="molecule type" value="mRNA"/>
</dbReference>
<dbReference type="EMBL" id="AK302313">
    <property type="protein sequence ID" value="BAG63651.1"/>
    <property type="molecule type" value="mRNA"/>
</dbReference>
<dbReference type="EMBL" id="AL133410">
    <property type="status" value="NOT_ANNOTATED_CDS"/>
    <property type="molecule type" value="Genomic_DNA"/>
</dbReference>
<dbReference type="EMBL" id="BC019247">
    <property type="protein sequence ID" value="AAH19247.1"/>
    <property type="molecule type" value="mRNA"/>
</dbReference>
<dbReference type="CCDS" id="CCDS43798.1">
    <molecule id="Q99932-3"/>
</dbReference>
<dbReference type="CCDS" id="CCDS6592.1">
    <molecule id="Q99932-2"/>
</dbReference>
<dbReference type="RefSeq" id="NP_001034681.1">
    <molecule id="Q99932-3"/>
    <property type="nucleotide sequence ID" value="NM_001039592.2"/>
</dbReference>
<dbReference type="RefSeq" id="NP_758516.1">
    <molecule id="Q99932-2"/>
    <property type="nucleotide sequence ID" value="NM_172312.2"/>
</dbReference>
<dbReference type="PDB" id="7UNG">
    <property type="method" value="EM"/>
    <property type="resolution" value="3.60 A"/>
    <property type="chains" value="D=1-485"/>
</dbReference>
<dbReference type="PDB" id="8J07">
    <property type="method" value="EM"/>
    <property type="resolution" value="4.10 A"/>
    <property type="chains" value="5H/5I/5J=1-485"/>
</dbReference>
<dbReference type="PDBsum" id="7UNG"/>
<dbReference type="PDBsum" id="8J07"/>
<dbReference type="EMDB" id="EMD-26624"/>
<dbReference type="EMDB" id="EMD-35888"/>
<dbReference type="SMR" id="Q99932"/>
<dbReference type="BioGRID" id="117606">
    <property type="interactions" value="89"/>
</dbReference>
<dbReference type="FunCoup" id="Q99932">
    <property type="interactions" value="93"/>
</dbReference>
<dbReference type="IntAct" id="Q99932">
    <property type="interactions" value="111"/>
</dbReference>
<dbReference type="MINT" id="Q99932"/>
<dbReference type="STRING" id="9606.ENSP00000340982"/>
<dbReference type="GlyGen" id="Q99932">
    <property type="glycosylation" value="1 site"/>
</dbReference>
<dbReference type="iPTMnet" id="Q99932"/>
<dbReference type="PhosphoSitePlus" id="Q99932"/>
<dbReference type="BioMuta" id="SPAG8"/>
<dbReference type="DMDM" id="62511128"/>
<dbReference type="jPOST" id="Q99932"/>
<dbReference type="MassIVE" id="Q99932"/>
<dbReference type="PaxDb" id="9606-ENSP00000340982"/>
<dbReference type="PeptideAtlas" id="Q99932"/>
<dbReference type="ProteomicsDB" id="19756"/>
<dbReference type="ProteomicsDB" id="78524">
    <molecule id="Q99932-1"/>
</dbReference>
<dbReference type="ProteomicsDB" id="78525">
    <molecule id="Q99932-2"/>
</dbReference>
<dbReference type="Antibodypedia" id="26087">
    <property type="antibodies" value="219 antibodies from 26 providers"/>
</dbReference>
<dbReference type="DNASU" id="26206"/>
<dbReference type="Ensembl" id="ENST00000340291.6">
    <molecule id="Q99932-2"/>
    <property type="protein sequence ID" value="ENSP00000340982.2"/>
    <property type="gene ID" value="ENSG00000137098.14"/>
</dbReference>
<dbReference type="Ensembl" id="ENST00000396638.7">
    <molecule id="Q99932-3"/>
    <property type="protein sequence ID" value="ENSP00000379878.2"/>
    <property type="gene ID" value="ENSG00000137098.14"/>
</dbReference>
<dbReference type="Ensembl" id="ENST00000475644.5">
    <molecule id="Q99932-1"/>
    <property type="protein sequence ID" value="ENSP00000418530.1"/>
    <property type="gene ID" value="ENSG00000137098.14"/>
</dbReference>
<dbReference type="GeneID" id="26206"/>
<dbReference type="KEGG" id="hsa:26206"/>
<dbReference type="MANE-Select" id="ENST00000396638.7">
    <property type="protein sequence ID" value="ENSP00000379878.2"/>
    <property type="RefSeq nucleotide sequence ID" value="NM_001039592.2"/>
    <property type="RefSeq protein sequence ID" value="NP_001034681.1"/>
</dbReference>
<dbReference type="UCSC" id="uc003zye.4">
    <molecule id="Q99932-3"/>
    <property type="organism name" value="human"/>
</dbReference>
<dbReference type="AGR" id="HGNC:14105"/>
<dbReference type="CTD" id="26206"/>
<dbReference type="DisGeNET" id="26206"/>
<dbReference type="GeneCards" id="SPAG8"/>
<dbReference type="HGNC" id="HGNC:14105">
    <property type="gene designation" value="SPAG8"/>
</dbReference>
<dbReference type="HPA" id="ENSG00000137098">
    <property type="expression patterns" value="Group enriched (choroid plexus, fallopian tube, testis)"/>
</dbReference>
<dbReference type="MalaCards" id="SPAG8"/>
<dbReference type="MIM" id="605731">
    <property type="type" value="gene"/>
</dbReference>
<dbReference type="neXtProt" id="NX_Q99932"/>
<dbReference type="OpenTargets" id="ENSG00000137098"/>
<dbReference type="PharmGKB" id="PA37843"/>
<dbReference type="VEuPathDB" id="HostDB:ENSG00000137098"/>
<dbReference type="eggNOG" id="ENOG502S06E">
    <property type="taxonomic scope" value="Eukaryota"/>
</dbReference>
<dbReference type="GeneTree" id="ENSGT00640000091617"/>
<dbReference type="HOGENOM" id="CLU_052284_0_0_1"/>
<dbReference type="InParanoid" id="Q99932"/>
<dbReference type="OMA" id="HCLLYNW"/>
<dbReference type="OrthoDB" id="2120499at2759"/>
<dbReference type="PAN-GO" id="Q99932">
    <property type="GO annotations" value="3 GO annotations based on evolutionary models"/>
</dbReference>
<dbReference type="PhylomeDB" id="Q99932"/>
<dbReference type="TreeFam" id="TF329075"/>
<dbReference type="PathwayCommons" id="Q99932"/>
<dbReference type="SignaLink" id="Q99932"/>
<dbReference type="BioGRID-ORCS" id="26206">
    <property type="hits" value="8 hits in 1141 CRISPR screens"/>
</dbReference>
<dbReference type="ChiTaRS" id="SPAG8">
    <property type="organism name" value="human"/>
</dbReference>
<dbReference type="GeneWiki" id="SPAG8"/>
<dbReference type="GenomeRNAi" id="26206"/>
<dbReference type="Pharos" id="Q99932">
    <property type="development level" value="Tbio"/>
</dbReference>
<dbReference type="PRO" id="PR:Q99932"/>
<dbReference type="Proteomes" id="UP000005640">
    <property type="component" value="Chromosome 9"/>
</dbReference>
<dbReference type="RNAct" id="Q99932">
    <property type="molecule type" value="protein"/>
</dbReference>
<dbReference type="Bgee" id="ENSG00000137098">
    <property type="expression patterns" value="Expressed in right uterine tube and 173 other cell types or tissues"/>
</dbReference>
<dbReference type="ExpressionAtlas" id="Q99932">
    <property type="expression patterns" value="baseline and differential"/>
</dbReference>
<dbReference type="GO" id="GO:0001669">
    <property type="term" value="C:acrosomal vesicle"/>
    <property type="evidence" value="ECO:0007669"/>
    <property type="project" value="UniProtKB-SubCell"/>
</dbReference>
<dbReference type="GO" id="GO:0160111">
    <property type="term" value="C:axonemal A tubule inner sheath"/>
    <property type="evidence" value="ECO:0000250"/>
    <property type="project" value="UniProtKB"/>
</dbReference>
<dbReference type="GO" id="GO:0005879">
    <property type="term" value="C:axonemal microtubule"/>
    <property type="evidence" value="ECO:0000314"/>
    <property type="project" value="UniProtKB"/>
</dbReference>
<dbReference type="GO" id="GO:0005929">
    <property type="term" value="C:cilium"/>
    <property type="evidence" value="ECO:0000314"/>
    <property type="project" value="HPA"/>
</dbReference>
<dbReference type="GO" id="GO:0005737">
    <property type="term" value="C:cytoplasm"/>
    <property type="evidence" value="ECO:0000318"/>
    <property type="project" value="GO_Central"/>
</dbReference>
<dbReference type="GO" id="GO:0005829">
    <property type="term" value="C:cytosol"/>
    <property type="evidence" value="ECO:0000314"/>
    <property type="project" value="HPA"/>
</dbReference>
<dbReference type="GO" id="GO:0001673">
    <property type="term" value="C:male germ cell nucleus"/>
    <property type="evidence" value="ECO:0007669"/>
    <property type="project" value="Ensembl"/>
</dbReference>
<dbReference type="GO" id="GO:0016020">
    <property type="term" value="C:membrane"/>
    <property type="evidence" value="ECO:0000303"/>
    <property type="project" value="UniProtKB"/>
</dbReference>
<dbReference type="GO" id="GO:0005815">
    <property type="term" value="C:microtubule organizing center"/>
    <property type="evidence" value="ECO:0007669"/>
    <property type="project" value="UniProtKB-SubCell"/>
</dbReference>
<dbReference type="GO" id="GO:0005654">
    <property type="term" value="C:nucleoplasm"/>
    <property type="evidence" value="ECO:0000314"/>
    <property type="project" value="HPA"/>
</dbReference>
<dbReference type="GO" id="GO:0005634">
    <property type="term" value="C:nucleus"/>
    <property type="evidence" value="ECO:0000318"/>
    <property type="project" value="GO_Central"/>
</dbReference>
<dbReference type="GO" id="GO:0036126">
    <property type="term" value="C:sperm flagellum"/>
    <property type="evidence" value="ECO:0000250"/>
    <property type="project" value="UniProtKB"/>
</dbReference>
<dbReference type="GO" id="GO:0005819">
    <property type="term" value="C:spindle"/>
    <property type="evidence" value="ECO:0007669"/>
    <property type="project" value="UniProtKB-SubCell"/>
</dbReference>
<dbReference type="GO" id="GO:0008017">
    <property type="term" value="F:microtubule binding"/>
    <property type="evidence" value="ECO:0007669"/>
    <property type="project" value="InterPro"/>
</dbReference>
<dbReference type="GO" id="GO:0030154">
    <property type="term" value="P:cell differentiation"/>
    <property type="evidence" value="ECO:0007669"/>
    <property type="project" value="UniProtKB-KW"/>
</dbReference>
<dbReference type="GO" id="GO:0030317">
    <property type="term" value="P:flagellated sperm motility"/>
    <property type="evidence" value="ECO:0000250"/>
    <property type="project" value="UniProtKB"/>
</dbReference>
<dbReference type="GO" id="GO:0045944">
    <property type="term" value="P:positive regulation of transcription by RNA polymerase II"/>
    <property type="evidence" value="ECO:0000318"/>
    <property type="project" value="GO_Central"/>
</dbReference>
<dbReference type="GO" id="GO:0007338">
    <property type="term" value="P:single fertilization"/>
    <property type="evidence" value="ECO:0007669"/>
    <property type="project" value="UniProtKB-KW"/>
</dbReference>
<dbReference type="GO" id="GO:0007283">
    <property type="term" value="P:spermatogenesis"/>
    <property type="evidence" value="ECO:0007669"/>
    <property type="project" value="UniProtKB-KW"/>
</dbReference>
<dbReference type="InterPro" id="IPR026124">
    <property type="entry name" value="Sperm-assoc_Ag8"/>
</dbReference>
<dbReference type="PANTHER" id="PTHR15510">
    <property type="entry name" value="SPERM-ASSOCIATED ANTIGEN 8"/>
    <property type="match status" value="1"/>
</dbReference>
<dbReference type="PANTHER" id="PTHR15510:SF5">
    <property type="entry name" value="SPERM-ASSOCIATED ANTIGEN 8"/>
    <property type="match status" value="1"/>
</dbReference>
<dbReference type="Pfam" id="PF22584">
    <property type="entry name" value="CFAP143"/>
    <property type="match status" value="1"/>
</dbReference>
<gene>
    <name evidence="13" type="primary">SPAG8</name>
</gene>
<proteinExistence type="evidence at protein level"/>